<name>Y3205_ORYSJ</name>
<proteinExistence type="evidence at transcript level"/>
<gene>
    <name type="ordered locus">Os03g0620500</name>
    <name type="ordered locus">LOC_Os03g42290</name>
    <name type="ORF">OSJNBb0111B07.8</name>
</gene>
<dbReference type="EMBL" id="AC097280">
    <property type="protein sequence ID" value="AAO34495.1"/>
    <property type="molecule type" value="Genomic_DNA"/>
</dbReference>
<dbReference type="EMBL" id="DP000009">
    <property type="protein sequence ID" value="ABF97667.1"/>
    <property type="molecule type" value="Genomic_DNA"/>
</dbReference>
<dbReference type="EMBL" id="AP008209">
    <property type="protein sequence ID" value="BAF12590.1"/>
    <property type="status" value="ALT_SEQ"/>
    <property type="molecule type" value="Genomic_DNA"/>
</dbReference>
<dbReference type="EMBL" id="AP014959">
    <property type="status" value="NOT_ANNOTATED_CDS"/>
    <property type="molecule type" value="Genomic_DNA"/>
</dbReference>
<dbReference type="EMBL" id="AK100451">
    <property type="status" value="NOT_ANNOTATED_CDS"/>
    <property type="molecule type" value="mRNA"/>
</dbReference>
<dbReference type="SMR" id="Q851W4"/>
<dbReference type="FunCoup" id="Q851W4">
    <property type="interactions" value="1385"/>
</dbReference>
<dbReference type="STRING" id="39947.Q851W4"/>
<dbReference type="PaxDb" id="39947-Q851W4"/>
<dbReference type="eggNOG" id="ENOG502QSIS">
    <property type="taxonomic scope" value="Eukaryota"/>
</dbReference>
<dbReference type="InParanoid" id="Q851W4"/>
<dbReference type="Proteomes" id="UP000000763">
    <property type="component" value="Chromosome 3"/>
</dbReference>
<dbReference type="Proteomes" id="UP000059680">
    <property type="component" value="Chromosome 3"/>
</dbReference>
<dbReference type="GO" id="GO:0005634">
    <property type="term" value="C:nucleus"/>
    <property type="evidence" value="ECO:0007669"/>
    <property type="project" value="UniProtKB-SubCell"/>
</dbReference>
<dbReference type="GO" id="GO:0003677">
    <property type="term" value="F:DNA binding"/>
    <property type="evidence" value="ECO:0007669"/>
    <property type="project" value="UniProtKB-KW"/>
</dbReference>
<dbReference type="CDD" id="cd10017">
    <property type="entry name" value="B3_DNA"/>
    <property type="match status" value="3"/>
</dbReference>
<dbReference type="Gene3D" id="2.40.330.10">
    <property type="entry name" value="DNA-binding pseudobarrel domain"/>
    <property type="match status" value="3"/>
</dbReference>
<dbReference type="InterPro" id="IPR003340">
    <property type="entry name" value="B3_DNA-bd"/>
</dbReference>
<dbReference type="InterPro" id="IPR015300">
    <property type="entry name" value="DNA-bd_pseudobarrel_sf"/>
</dbReference>
<dbReference type="InterPro" id="IPR044837">
    <property type="entry name" value="REM16-like"/>
</dbReference>
<dbReference type="PANTHER" id="PTHR31391:SF48">
    <property type="entry name" value="B3 DOMAIN-CONTAINING PROTEIN OS03G0620500"/>
    <property type="match status" value="1"/>
</dbReference>
<dbReference type="PANTHER" id="PTHR31391">
    <property type="entry name" value="B3 DOMAIN-CONTAINING PROTEIN OS11G0197600-RELATED"/>
    <property type="match status" value="1"/>
</dbReference>
<dbReference type="Pfam" id="PF02362">
    <property type="entry name" value="B3"/>
    <property type="match status" value="3"/>
</dbReference>
<dbReference type="SMART" id="SM01019">
    <property type="entry name" value="B3"/>
    <property type="match status" value="3"/>
</dbReference>
<dbReference type="SUPFAM" id="SSF101936">
    <property type="entry name" value="DNA-binding pseudobarrel domain"/>
    <property type="match status" value="3"/>
</dbReference>
<dbReference type="PROSITE" id="PS50863">
    <property type="entry name" value="B3"/>
    <property type="match status" value="3"/>
</dbReference>
<feature type="chain" id="PRO_0000376956" description="B3 domain-containing protein Os03g0620500">
    <location>
        <begin position="1"/>
        <end position="545"/>
    </location>
</feature>
<feature type="DNA-binding region" description="TF-B3 1" evidence="1">
    <location>
        <begin position="26"/>
        <end position="119"/>
    </location>
</feature>
<feature type="DNA-binding region" description="TF-B3 2" evidence="1">
    <location>
        <begin position="231"/>
        <end position="331"/>
    </location>
</feature>
<feature type="DNA-binding region" description="TF-B3 3" evidence="1">
    <location>
        <begin position="441"/>
        <end position="542"/>
    </location>
</feature>
<feature type="region of interest" description="Disordered" evidence="2">
    <location>
        <begin position="111"/>
        <end position="188"/>
    </location>
</feature>
<feature type="region of interest" description="Disordered" evidence="2">
    <location>
        <begin position="368"/>
        <end position="400"/>
    </location>
</feature>
<feature type="compositionally biased region" description="Basic and acidic residues" evidence="2">
    <location>
        <begin position="173"/>
        <end position="186"/>
    </location>
</feature>
<feature type="splice variant" id="VSP_037443" description="In isoform 2." evidence="3">
    <location>
        <begin position="1"/>
        <end position="196"/>
    </location>
</feature>
<feature type="sequence conflict" description="In Ref. 5; AK100451." evidence="4" ref="5">
    <original>H</original>
    <variation>Y</variation>
    <location>
        <position position="242"/>
    </location>
</feature>
<feature type="sequence conflict" description="In Ref. 5; AK100451." evidence="4" ref="5">
    <original>Q</original>
    <variation>R</variation>
    <location>
        <position position="396"/>
    </location>
</feature>
<keyword id="KW-0025">Alternative splicing</keyword>
<keyword id="KW-0238">DNA-binding</keyword>
<keyword id="KW-0539">Nucleus</keyword>
<keyword id="KW-1185">Reference proteome</keyword>
<keyword id="KW-0677">Repeat</keyword>
<keyword id="KW-0804">Transcription</keyword>
<keyword id="KW-0805">Transcription regulation</keyword>
<reference key="1">
    <citation type="journal article" date="2005" name="Genome Res.">
        <title>Sequence, annotation, and analysis of synteny between rice chromosome 3 and diverged grass species.</title>
        <authorList>
            <consortium name="The rice chromosome 3 sequencing consortium"/>
            <person name="Buell C.R."/>
            <person name="Yuan Q."/>
            <person name="Ouyang S."/>
            <person name="Liu J."/>
            <person name="Zhu W."/>
            <person name="Wang A."/>
            <person name="Maiti R."/>
            <person name="Haas B."/>
            <person name="Wortman J."/>
            <person name="Pertea M."/>
            <person name="Jones K.M."/>
            <person name="Kim M."/>
            <person name="Overton L."/>
            <person name="Tsitrin T."/>
            <person name="Fadrosh D."/>
            <person name="Bera J."/>
            <person name="Weaver B."/>
            <person name="Jin S."/>
            <person name="Johri S."/>
            <person name="Reardon M."/>
            <person name="Webb K."/>
            <person name="Hill J."/>
            <person name="Moffat K."/>
            <person name="Tallon L."/>
            <person name="Van Aken S."/>
            <person name="Lewis M."/>
            <person name="Utterback T."/>
            <person name="Feldblyum T."/>
            <person name="Zismann V."/>
            <person name="Iobst S."/>
            <person name="Hsiao J."/>
            <person name="de Vazeille A.R."/>
            <person name="Salzberg S.L."/>
            <person name="White O."/>
            <person name="Fraser C.M."/>
            <person name="Yu Y."/>
            <person name="Kim H."/>
            <person name="Rambo T."/>
            <person name="Currie J."/>
            <person name="Collura K."/>
            <person name="Kernodle-Thompson S."/>
            <person name="Wei F."/>
            <person name="Kudrna K."/>
            <person name="Ammiraju J.S.S."/>
            <person name="Luo M."/>
            <person name="Goicoechea J.L."/>
            <person name="Wing R.A."/>
            <person name="Henry D."/>
            <person name="Oates R."/>
            <person name="Palmer M."/>
            <person name="Pries G."/>
            <person name="Saski C."/>
            <person name="Simmons J."/>
            <person name="Soderlund C."/>
            <person name="Nelson W."/>
            <person name="de la Bastide M."/>
            <person name="Spiegel L."/>
            <person name="Nascimento L."/>
            <person name="Huang E."/>
            <person name="Preston R."/>
            <person name="Zutavern T."/>
            <person name="Palmer L."/>
            <person name="O'Shaughnessy A."/>
            <person name="Dike S."/>
            <person name="McCombie W.R."/>
            <person name="Minx P."/>
            <person name="Cordum H."/>
            <person name="Wilson R."/>
            <person name="Jin W."/>
            <person name="Lee H.R."/>
            <person name="Jiang J."/>
            <person name="Jackson S."/>
        </authorList>
    </citation>
    <scope>NUCLEOTIDE SEQUENCE [LARGE SCALE GENOMIC DNA]</scope>
    <source>
        <strain>cv. Nipponbare</strain>
    </source>
</reference>
<reference key="2">
    <citation type="journal article" date="2005" name="Nature">
        <title>The map-based sequence of the rice genome.</title>
        <authorList>
            <consortium name="International rice genome sequencing project (IRGSP)"/>
        </authorList>
    </citation>
    <scope>NUCLEOTIDE SEQUENCE [LARGE SCALE GENOMIC DNA]</scope>
    <source>
        <strain>cv. Nipponbare</strain>
    </source>
</reference>
<reference key="3">
    <citation type="journal article" date="2008" name="Nucleic Acids Res.">
        <title>The rice annotation project database (RAP-DB): 2008 update.</title>
        <authorList>
            <consortium name="The rice annotation project (RAP)"/>
        </authorList>
    </citation>
    <scope>GENOME REANNOTATION</scope>
    <source>
        <strain>cv. Nipponbare</strain>
    </source>
</reference>
<reference key="4">
    <citation type="journal article" date="2013" name="Rice">
        <title>Improvement of the Oryza sativa Nipponbare reference genome using next generation sequence and optical map data.</title>
        <authorList>
            <person name="Kawahara Y."/>
            <person name="de la Bastide M."/>
            <person name="Hamilton J.P."/>
            <person name="Kanamori H."/>
            <person name="McCombie W.R."/>
            <person name="Ouyang S."/>
            <person name="Schwartz D.C."/>
            <person name="Tanaka T."/>
            <person name="Wu J."/>
            <person name="Zhou S."/>
            <person name="Childs K.L."/>
            <person name="Davidson R.M."/>
            <person name="Lin H."/>
            <person name="Quesada-Ocampo L."/>
            <person name="Vaillancourt B."/>
            <person name="Sakai H."/>
            <person name="Lee S.S."/>
            <person name="Kim J."/>
            <person name="Numa H."/>
            <person name="Itoh T."/>
            <person name="Buell C.R."/>
            <person name="Matsumoto T."/>
        </authorList>
    </citation>
    <scope>GENOME REANNOTATION</scope>
    <source>
        <strain>cv. Nipponbare</strain>
    </source>
</reference>
<reference key="5">
    <citation type="journal article" date="2003" name="Science">
        <title>Collection, mapping, and annotation of over 28,000 cDNA clones from japonica rice.</title>
        <authorList>
            <consortium name="The rice full-length cDNA consortium"/>
        </authorList>
    </citation>
    <scope>NUCLEOTIDE SEQUENCE [LARGE SCALE MRNA] (ISOFORM 2)</scope>
    <source>
        <strain>cv. Nipponbare</strain>
    </source>
</reference>
<sequence length="545" mass="62055">MAGQGSQMKKYCDCCKRYVDHSNGKMKCFHRQMSANFEHSMIIPNKFLDQFGGKISRTVELESPKGNVYVVKVSKHMNKTVLQCGWEAFVDAHQIEENDSLLFRHIKNSRRASGVQERNADPIDVSSSTHDDTVQSSGGERFARSESGSDSQHSKTAKLAATCSSGGSECTGEEAKESSSSEHESSYDLVDPQIAPMPGYVLSRGTNLSQAHEEKLDMLVQEIRPEIPLYVTTMKHSNVNSHHASLVIAKHYACAYFPHTSQTITLKWHGKNRKWHPKFYIRKDQVGYILHGRWIDFVRHNHVKEGDICIFHLKNFNGRKFRATVHLLRETIPHSFGALHIPKRFESRNGRMRLKMTDDRRVSSTECRRGTMEPSTTNVKKEADNEQCNNGQGKRQEPLNFDVSVGSSKPYLTADRVSLTEEQFMKVEENVHSIQSEGPIYVSIMNKSNVGTDGLYIITLGRQFAIRYLPEGEQTLTLLTTGTGKAWQVKMRPRSGDARMFTLGWRDFVRDNRLQTEDICLFQLTKNSERGLAMKVHIIRHNERS</sequence>
<comment type="subcellular location">
    <subcellularLocation>
        <location evidence="1">Nucleus</location>
    </subcellularLocation>
</comment>
<comment type="alternative products">
    <event type="alternative splicing"/>
    <isoform>
        <id>Q851W4-1</id>
        <name>1</name>
        <sequence type="displayed"/>
    </isoform>
    <isoform>
        <id>Q851W4-2</id>
        <name>2</name>
        <sequence type="described" ref="VSP_037443"/>
    </isoform>
</comment>
<comment type="sequence caution" evidence="4">
    <conflict type="erroneous gene model prediction">
        <sequence resource="EMBL-CDS" id="BAF12590"/>
    </conflict>
</comment>
<protein>
    <recommendedName>
        <fullName>B3 domain-containing protein Os03g0620500</fullName>
    </recommendedName>
</protein>
<evidence type="ECO:0000255" key="1">
    <source>
        <dbReference type="PROSITE-ProRule" id="PRU00326"/>
    </source>
</evidence>
<evidence type="ECO:0000256" key="2">
    <source>
        <dbReference type="SAM" id="MobiDB-lite"/>
    </source>
</evidence>
<evidence type="ECO:0000303" key="3">
    <source>
    </source>
</evidence>
<evidence type="ECO:0000305" key="4"/>
<accession>Q851W4</accession>
<accession>Q0DQ98</accession>
<accession>Q10GN4</accession>
<organism>
    <name type="scientific">Oryza sativa subsp. japonica</name>
    <name type="common">Rice</name>
    <dbReference type="NCBI Taxonomy" id="39947"/>
    <lineage>
        <taxon>Eukaryota</taxon>
        <taxon>Viridiplantae</taxon>
        <taxon>Streptophyta</taxon>
        <taxon>Embryophyta</taxon>
        <taxon>Tracheophyta</taxon>
        <taxon>Spermatophyta</taxon>
        <taxon>Magnoliopsida</taxon>
        <taxon>Liliopsida</taxon>
        <taxon>Poales</taxon>
        <taxon>Poaceae</taxon>
        <taxon>BOP clade</taxon>
        <taxon>Oryzoideae</taxon>
        <taxon>Oryzeae</taxon>
        <taxon>Oryzinae</taxon>
        <taxon>Oryza</taxon>
        <taxon>Oryza sativa</taxon>
    </lineage>
</organism>